<sequence>MNTEKPSVAHNVDHNEIAKFEAVASRWWDLEGEFKPLHRINPLRLGYITERSGGLFGKKVLDVGCGGGILAESMAREGATVTGLDMGFEPLQVAKLHALESGIEVEYVQETVEEHAAKHAQQYDVVTCMEMLEHVPDPQSVVHACAQLVKPGGEVFFSTLNRNGKSWLMAVVGAEYILRMVPKGTHDVKKFIKPAELLSWVDETVLKEQHITGLHYNPITNTFKLGPGVDVNYMLHTRAKKA</sequence>
<accession>P37431</accession>
<dbReference type="EC" id="2.1.1.222" evidence="1"/>
<dbReference type="EC" id="2.1.1.64" evidence="1"/>
<dbReference type="EMBL" id="AE006468">
    <property type="protein sequence ID" value="AAL21177.1"/>
    <property type="molecule type" value="Genomic_DNA"/>
</dbReference>
<dbReference type="EMBL" id="X72948">
    <property type="protein sequence ID" value="CAA51451.1"/>
    <property type="molecule type" value="Genomic_DNA"/>
</dbReference>
<dbReference type="PIR" id="S32628">
    <property type="entry name" value="S32628"/>
</dbReference>
<dbReference type="RefSeq" id="NP_461218.1">
    <property type="nucleotide sequence ID" value="NC_003197.2"/>
</dbReference>
<dbReference type="RefSeq" id="WP_001091009.1">
    <property type="nucleotide sequence ID" value="NC_003197.2"/>
</dbReference>
<dbReference type="SMR" id="P37431"/>
<dbReference type="STRING" id="99287.STM2276"/>
<dbReference type="PaxDb" id="99287-STM2276"/>
<dbReference type="GeneID" id="1253798"/>
<dbReference type="KEGG" id="stm:STM2276"/>
<dbReference type="PATRIC" id="fig|99287.12.peg.2409"/>
<dbReference type="HOGENOM" id="CLU_042432_5_0_6"/>
<dbReference type="OMA" id="LASRWWD"/>
<dbReference type="PhylomeDB" id="P37431"/>
<dbReference type="BioCyc" id="SENT99287:STM2276-MONOMER"/>
<dbReference type="UniPathway" id="UPA00232"/>
<dbReference type="Proteomes" id="UP000001014">
    <property type="component" value="Chromosome"/>
</dbReference>
<dbReference type="GO" id="GO:0102208">
    <property type="term" value="F:2-polyprenyl-6-hydroxyphenol methylase activity"/>
    <property type="evidence" value="ECO:0007669"/>
    <property type="project" value="UniProtKB-EC"/>
</dbReference>
<dbReference type="GO" id="GO:0061542">
    <property type="term" value="F:3-demethylubiquinol 3-O-methyltransferase activity"/>
    <property type="evidence" value="ECO:0007669"/>
    <property type="project" value="UniProtKB-UniRule"/>
</dbReference>
<dbReference type="GO" id="GO:0008168">
    <property type="term" value="F:methyltransferase activity"/>
    <property type="evidence" value="ECO:0000318"/>
    <property type="project" value="GO_Central"/>
</dbReference>
<dbReference type="GO" id="GO:0010420">
    <property type="term" value="F:polyprenyldihydroxybenzoate methyltransferase activity"/>
    <property type="evidence" value="ECO:0007669"/>
    <property type="project" value="InterPro"/>
</dbReference>
<dbReference type="GO" id="GO:0032259">
    <property type="term" value="P:methylation"/>
    <property type="evidence" value="ECO:0007669"/>
    <property type="project" value="UniProtKB-KW"/>
</dbReference>
<dbReference type="CDD" id="cd02440">
    <property type="entry name" value="AdoMet_MTases"/>
    <property type="match status" value="1"/>
</dbReference>
<dbReference type="FunFam" id="3.40.50.150:FF:000028">
    <property type="entry name" value="Ubiquinone biosynthesis O-methyltransferase"/>
    <property type="match status" value="1"/>
</dbReference>
<dbReference type="Gene3D" id="3.40.50.150">
    <property type="entry name" value="Vaccinia Virus protein VP39"/>
    <property type="match status" value="1"/>
</dbReference>
<dbReference type="HAMAP" id="MF_00472">
    <property type="entry name" value="UbiG"/>
    <property type="match status" value="1"/>
</dbReference>
<dbReference type="InterPro" id="IPR029063">
    <property type="entry name" value="SAM-dependent_MTases_sf"/>
</dbReference>
<dbReference type="InterPro" id="IPR010233">
    <property type="entry name" value="UbiG_MeTrfase"/>
</dbReference>
<dbReference type="NCBIfam" id="TIGR01983">
    <property type="entry name" value="UbiG"/>
    <property type="match status" value="1"/>
</dbReference>
<dbReference type="PANTHER" id="PTHR43464">
    <property type="entry name" value="METHYLTRANSFERASE"/>
    <property type="match status" value="1"/>
</dbReference>
<dbReference type="PANTHER" id="PTHR43464:SF19">
    <property type="entry name" value="UBIQUINONE BIOSYNTHESIS O-METHYLTRANSFERASE, MITOCHONDRIAL"/>
    <property type="match status" value="1"/>
</dbReference>
<dbReference type="Pfam" id="PF13489">
    <property type="entry name" value="Methyltransf_23"/>
    <property type="match status" value="1"/>
</dbReference>
<dbReference type="SUPFAM" id="SSF53335">
    <property type="entry name" value="S-adenosyl-L-methionine-dependent methyltransferases"/>
    <property type="match status" value="1"/>
</dbReference>
<name>UBIG_SALTY</name>
<proteinExistence type="inferred from homology"/>
<keyword id="KW-0489">Methyltransferase</keyword>
<keyword id="KW-1185">Reference proteome</keyword>
<keyword id="KW-0949">S-adenosyl-L-methionine</keyword>
<keyword id="KW-0808">Transferase</keyword>
<keyword id="KW-0831">Ubiquinone biosynthesis</keyword>
<organism>
    <name type="scientific">Salmonella typhimurium (strain LT2 / SGSC1412 / ATCC 700720)</name>
    <dbReference type="NCBI Taxonomy" id="99287"/>
    <lineage>
        <taxon>Bacteria</taxon>
        <taxon>Pseudomonadati</taxon>
        <taxon>Pseudomonadota</taxon>
        <taxon>Gammaproteobacteria</taxon>
        <taxon>Enterobacterales</taxon>
        <taxon>Enterobacteriaceae</taxon>
        <taxon>Salmonella</taxon>
    </lineage>
</organism>
<feature type="chain" id="PRO_0000193402" description="Ubiquinone biosynthesis O-methyltransferase">
    <location>
        <begin position="1"/>
        <end position="242"/>
    </location>
</feature>
<feature type="binding site" evidence="1">
    <location>
        <position position="44"/>
    </location>
    <ligand>
        <name>S-adenosyl-L-methionine</name>
        <dbReference type="ChEBI" id="CHEBI:59789"/>
    </ligand>
</feature>
<feature type="binding site" evidence="1">
    <location>
        <position position="64"/>
    </location>
    <ligand>
        <name>S-adenosyl-L-methionine</name>
        <dbReference type="ChEBI" id="CHEBI:59789"/>
    </ligand>
</feature>
<feature type="binding site" evidence="1">
    <location>
        <position position="85"/>
    </location>
    <ligand>
        <name>S-adenosyl-L-methionine</name>
        <dbReference type="ChEBI" id="CHEBI:59789"/>
    </ligand>
</feature>
<feature type="binding site" evidence="1">
    <location>
        <position position="129"/>
    </location>
    <ligand>
        <name>S-adenosyl-L-methionine</name>
        <dbReference type="ChEBI" id="CHEBI:59789"/>
    </ligand>
</feature>
<comment type="function">
    <text evidence="1">O-methyltransferase that catalyzes the 2 O-methylation steps in the ubiquinone biosynthetic pathway.</text>
</comment>
<comment type="catalytic activity">
    <reaction evidence="1">
        <text>a 3-demethylubiquinol + S-adenosyl-L-methionine = a ubiquinol + S-adenosyl-L-homocysteine + H(+)</text>
        <dbReference type="Rhea" id="RHEA:44380"/>
        <dbReference type="Rhea" id="RHEA-COMP:9566"/>
        <dbReference type="Rhea" id="RHEA-COMP:10914"/>
        <dbReference type="ChEBI" id="CHEBI:15378"/>
        <dbReference type="ChEBI" id="CHEBI:17976"/>
        <dbReference type="ChEBI" id="CHEBI:57856"/>
        <dbReference type="ChEBI" id="CHEBI:59789"/>
        <dbReference type="ChEBI" id="CHEBI:84422"/>
        <dbReference type="EC" id="2.1.1.64"/>
    </reaction>
</comment>
<comment type="catalytic activity">
    <reaction evidence="1">
        <text>a 3-(all-trans-polyprenyl)benzene-1,2-diol + S-adenosyl-L-methionine = a 2-methoxy-6-(all-trans-polyprenyl)phenol + S-adenosyl-L-homocysteine + H(+)</text>
        <dbReference type="Rhea" id="RHEA:31411"/>
        <dbReference type="Rhea" id="RHEA-COMP:9550"/>
        <dbReference type="Rhea" id="RHEA-COMP:9551"/>
        <dbReference type="ChEBI" id="CHEBI:15378"/>
        <dbReference type="ChEBI" id="CHEBI:57856"/>
        <dbReference type="ChEBI" id="CHEBI:59789"/>
        <dbReference type="ChEBI" id="CHEBI:62729"/>
        <dbReference type="ChEBI" id="CHEBI:62731"/>
        <dbReference type="EC" id="2.1.1.222"/>
    </reaction>
</comment>
<comment type="pathway">
    <text evidence="1">Cofactor biosynthesis; ubiquinone biosynthesis.</text>
</comment>
<comment type="similarity">
    <text evidence="1">Belongs to the methyltransferase superfamily. UbiG/COQ3 family.</text>
</comment>
<gene>
    <name evidence="1" type="primary">ubiG</name>
    <name type="ordered locus">STM2276</name>
</gene>
<protein>
    <recommendedName>
        <fullName evidence="1">Ubiquinone biosynthesis O-methyltransferase</fullName>
    </recommendedName>
    <alternativeName>
        <fullName evidence="1">2-polyprenyl-6-hydroxyphenol methylase</fullName>
        <ecNumber evidence="1">2.1.1.222</ecNumber>
    </alternativeName>
    <alternativeName>
        <fullName evidence="1">3-demethylubiquinone 3-O-methyltransferase</fullName>
        <ecNumber evidence="1">2.1.1.64</ecNumber>
    </alternativeName>
</protein>
<evidence type="ECO:0000255" key="1">
    <source>
        <dbReference type="HAMAP-Rule" id="MF_00472"/>
    </source>
</evidence>
<reference key="1">
    <citation type="journal article" date="2001" name="Nature">
        <title>Complete genome sequence of Salmonella enterica serovar Typhimurium LT2.</title>
        <authorList>
            <person name="McClelland M."/>
            <person name="Sanderson K.E."/>
            <person name="Spieth J."/>
            <person name="Clifton S.W."/>
            <person name="Latreille P."/>
            <person name="Courtney L."/>
            <person name="Porwollik S."/>
            <person name="Ali J."/>
            <person name="Dante M."/>
            <person name="Du F."/>
            <person name="Hou S."/>
            <person name="Layman D."/>
            <person name="Leonard S."/>
            <person name="Nguyen C."/>
            <person name="Scott K."/>
            <person name="Holmes A."/>
            <person name="Grewal N."/>
            <person name="Mulvaney E."/>
            <person name="Ryan E."/>
            <person name="Sun H."/>
            <person name="Florea L."/>
            <person name="Miller W."/>
            <person name="Stoneking T."/>
            <person name="Nhan M."/>
            <person name="Waterston R."/>
            <person name="Wilson R.K."/>
        </authorList>
    </citation>
    <scope>NUCLEOTIDE SEQUENCE [LARGE SCALE GENOMIC DNA]</scope>
    <source>
        <strain>LT2 / SGSC1412 / ATCC 700720</strain>
    </source>
</reference>
<reference key="2">
    <citation type="journal article" date="1994" name="J. Bacteriol.">
        <title>Cloning and sequencing of the genes from Salmonella typhimurium encoding a new bacterial ribonucleotide reductase.</title>
        <authorList>
            <person name="Jordan A."/>
            <person name="Gibert I."/>
            <person name="Barbe J."/>
        </authorList>
    </citation>
    <scope>NUCLEOTIDE SEQUENCE [GENOMIC DNA] OF 34-242</scope>
    <source>
        <strain>LT2</strain>
    </source>
</reference>